<comment type="function">
    <text evidence="1">Catalyzes the conversion of acetate into acetyl-CoA (AcCoA), an essential intermediate at the junction of anabolic and catabolic pathways. AcsA undergoes a two-step reaction. In the first half reaction, AcsA combines acetate with ATP to form acetyl-adenylate (AcAMP) intermediate. In the second half reaction, it can then transfer the acetyl group from AcAMP to the sulfhydryl group of CoA, forming the product AcCoA.</text>
</comment>
<comment type="catalytic activity">
    <reaction evidence="1">
        <text>acetate + ATP + CoA = acetyl-CoA + AMP + diphosphate</text>
        <dbReference type="Rhea" id="RHEA:23176"/>
        <dbReference type="ChEBI" id="CHEBI:30089"/>
        <dbReference type="ChEBI" id="CHEBI:30616"/>
        <dbReference type="ChEBI" id="CHEBI:33019"/>
        <dbReference type="ChEBI" id="CHEBI:57287"/>
        <dbReference type="ChEBI" id="CHEBI:57288"/>
        <dbReference type="ChEBI" id="CHEBI:456215"/>
        <dbReference type="EC" id="6.2.1.1"/>
    </reaction>
</comment>
<comment type="cofactor">
    <cofactor evidence="1">
        <name>Mg(2+)</name>
        <dbReference type="ChEBI" id="CHEBI:18420"/>
    </cofactor>
</comment>
<comment type="PTM">
    <text evidence="1">Acetylated. Deacetylation by the SIR2-homolog deacetylase activates the enzyme.</text>
</comment>
<comment type="similarity">
    <text evidence="1">Belongs to the ATP-dependent AMP-binding enzyme family.</text>
</comment>
<accession>Q0VSR6</accession>
<feature type="chain" id="PRO_1000065267" description="Acetyl-coenzyme A synthetase">
    <location>
        <begin position="1"/>
        <end position="645"/>
    </location>
</feature>
<feature type="binding site" evidence="1">
    <location>
        <begin position="190"/>
        <end position="193"/>
    </location>
    <ligand>
        <name>CoA</name>
        <dbReference type="ChEBI" id="CHEBI:57287"/>
    </ligand>
</feature>
<feature type="binding site" evidence="1">
    <location>
        <position position="308"/>
    </location>
    <ligand>
        <name>CoA</name>
        <dbReference type="ChEBI" id="CHEBI:57287"/>
    </ligand>
</feature>
<feature type="binding site" evidence="1">
    <location>
        <begin position="384"/>
        <end position="386"/>
    </location>
    <ligand>
        <name>ATP</name>
        <dbReference type="ChEBI" id="CHEBI:30616"/>
    </ligand>
</feature>
<feature type="binding site" evidence="1">
    <location>
        <begin position="408"/>
        <end position="413"/>
    </location>
    <ligand>
        <name>ATP</name>
        <dbReference type="ChEBI" id="CHEBI:30616"/>
    </ligand>
</feature>
<feature type="binding site" evidence="1">
    <location>
        <position position="497"/>
    </location>
    <ligand>
        <name>ATP</name>
        <dbReference type="ChEBI" id="CHEBI:30616"/>
    </ligand>
</feature>
<feature type="binding site" evidence="1">
    <location>
        <position position="512"/>
    </location>
    <ligand>
        <name>ATP</name>
        <dbReference type="ChEBI" id="CHEBI:30616"/>
    </ligand>
</feature>
<feature type="binding site" evidence="1">
    <location>
        <position position="520"/>
    </location>
    <ligand>
        <name>CoA</name>
        <dbReference type="ChEBI" id="CHEBI:57287"/>
    </ligand>
</feature>
<feature type="binding site" evidence="1">
    <location>
        <position position="523"/>
    </location>
    <ligand>
        <name>ATP</name>
        <dbReference type="ChEBI" id="CHEBI:30616"/>
    </ligand>
</feature>
<feature type="binding site" evidence="1">
    <location>
        <position position="534"/>
    </location>
    <ligand>
        <name>Mg(2+)</name>
        <dbReference type="ChEBI" id="CHEBI:18420"/>
    </ligand>
</feature>
<feature type="binding site" evidence="1">
    <location>
        <position position="536"/>
    </location>
    <ligand>
        <name>Mg(2+)</name>
        <dbReference type="ChEBI" id="CHEBI:18420"/>
    </ligand>
</feature>
<feature type="binding site" evidence="1">
    <location>
        <position position="539"/>
    </location>
    <ligand>
        <name>Mg(2+)</name>
        <dbReference type="ChEBI" id="CHEBI:18420"/>
    </ligand>
</feature>
<feature type="modified residue" description="N6-acetyllysine" evidence="1">
    <location>
        <position position="606"/>
    </location>
</feature>
<protein>
    <recommendedName>
        <fullName evidence="1">Acetyl-coenzyme A synthetase</fullName>
        <shortName evidence="1">AcCoA synthetase</shortName>
        <shortName evidence="1">Acs</shortName>
        <ecNumber evidence="1">6.2.1.1</ecNumber>
    </recommendedName>
    <alternativeName>
        <fullName evidence="1">Acetate--CoA ligase</fullName>
    </alternativeName>
    <alternativeName>
        <fullName evidence="1">Acyl-activating enzyme</fullName>
    </alternativeName>
</protein>
<proteinExistence type="inferred from homology"/>
<organism>
    <name type="scientific">Alcanivorax borkumensis (strain ATCC 700651 / DSM 11573 / NCIMB 13689 / SK2)</name>
    <dbReference type="NCBI Taxonomy" id="393595"/>
    <lineage>
        <taxon>Bacteria</taxon>
        <taxon>Pseudomonadati</taxon>
        <taxon>Pseudomonadota</taxon>
        <taxon>Gammaproteobacteria</taxon>
        <taxon>Oceanospirillales</taxon>
        <taxon>Alcanivoracaceae</taxon>
        <taxon>Alcanivorax</taxon>
    </lineage>
</organism>
<name>ACSA_ALCBS</name>
<reference key="1">
    <citation type="journal article" date="2006" name="Nat. Biotechnol.">
        <title>Genome sequence of the ubiquitous hydrocarbon-degrading marine bacterium Alcanivorax borkumensis.</title>
        <authorList>
            <person name="Schneiker S."/>
            <person name="Martins dos Santos V.A.P."/>
            <person name="Bartels D."/>
            <person name="Bekel T."/>
            <person name="Brecht M."/>
            <person name="Buhrmester J."/>
            <person name="Chernikova T.N."/>
            <person name="Denaro R."/>
            <person name="Ferrer M."/>
            <person name="Gertler C."/>
            <person name="Goesmann A."/>
            <person name="Golyshina O.V."/>
            <person name="Kaminski F."/>
            <person name="Khachane A.N."/>
            <person name="Lang S."/>
            <person name="Linke B."/>
            <person name="McHardy A.C."/>
            <person name="Meyer F."/>
            <person name="Nechitaylo T."/>
            <person name="Puehler A."/>
            <person name="Regenhardt D."/>
            <person name="Rupp O."/>
            <person name="Sabirova J.S."/>
            <person name="Selbitschka W."/>
            <person name="Yakimov M.M."/>
            <person name="Timmis K.N."/>
            <person name="Vorhoelter F.-J."/>
            <person name="Weidner S."/>
            <person name="Kaiser O."/>
            <person name="Golyshin P.N."/>
        </authorList>
    </citation>
    <scope>NUCLEOTIDE SEQUENCE [LARGE SCALE GENOMIC DNA]</scope>
    <source>
        <strain>ATCC 700651 / DSM 11573 / NCIMB 13689 / SK2</strain>
    </source>
</reference>
<evidence type="ECO:0000255" key="1">
    <source>
        <dbReference type="HAMAP-Rule" id="MF_01123"/>
    </source>
</evidence>
<sequence length="645" mass="71302">MSQVHIHPVPADYKKQTLMDRETYDRWYSQSINDPGTFWAERAEQLLDWKTPWDTVSEWDFNEGRAAWFKGATLNACYNCVDRHLPERANQTAIIWEGDEPDQDKHISYQQLFEEVSKFGNVLKNRGVKKGDRVVIYMPMIPEAAYAMLACARIGAIHSVVFGGFSPEALKDRILNAEACALITADEGVRGGKTIPLKVNADKALDGIDCVHTCLTVKRTGGDVDWQAPRDVWYHEAMADASSDCEPEWVEAEDPLFTLYTSGSTGKPKGVVHTTAGYLLNTALTHKYVFDYQDGDIYWCTADVGWITGHSYIVYGPLANGATTLMFEGVPTYPDASRCWQVVDKHKVNIFYTAPTAIRALMGLGDAPVEQTSRASLKLLGTVGEPINPEAWEWYYRVVGDSRCPIVDTWWQTETGAIMIAPLPGAVDLKAGSATLPMFGVQPGLMDPDGNELDGAASGNLVLKASWPSQIRTVYGDHQRLIDTYFSAYKGCYFTGDGARRDEDGYYWITGRVDDVLNVSGHRLGTAEIESALVLHPSISEAAVVGYQHDVKGQGIYAYVSLMAGKEGSEELVKALRDLVTQEIGPIAKPDLIHFAPGLPKTRSGKIMRRILRKIAADELDSLGDTSTLADPSVVDQLIDNRQNK</sequence>
<keyword id="KW-0007">Acetylation</keyword>
<keyword id="KW-0067">ATP-binding</keyword>
<keyword id="KW-0436">Ligase</keyword>
<keyword id="KW-0460">Magnesium</keyword>
<keyword id="KW-0479">Metal-binding</keyword>
<keyword id="KW-0547">Nucleotide-binding</keyword>
<keyword id="KW-1185">Reference proteome</keyword>
<gene>
    <name evidence="1" type="primary">acsA</name>
    <name type="ordered locus">ABO_0334</name>
</gene>
<dbReference type="EC" id="6.2.1.1" evidence="1"/>
<dbReference type="EMBL" id="AM286690">
    <property type="protein sequence ID" value="CAL15782.1"/>
    <property type="molecule type" value="Genomic_DNA"/>
</dbReference>
<dbReference type="SMR" id="Q0VSR6"/>
<dbReference type="STRING" id="393595.ABO_0334"/>
<dbReference type="KEGG" id="abo:ABO_0334"/>
<dbReference type="eggNOG" id="COG0365">
    <property type="taxonomic scope" value="Bacteria"/>
</dbReference>
<dbReference type="HOGENOM" id="CLU_000022_3_6_6"/>
<dbReference type="OrthoDB" id="9803968at2"/>
<dbReference type="Proteomes" id="UP000008871">
    <property type="component" value="Chromosome"/>
</dbReference>
<dbReference type="GO" id="GO:0005829">
    <property type="term" value="C:cytosol"/>
    <property type="evidence" value="ECO:0007669"/>
    <property type="project" value="TreeGrafter"/>
</dbReference>
<dbReference type="GO" id="GO:0003987">
    <property type="term" value="F:acetate-CoA ligase activity"/>
    <property type="evidence" value="ECO:0007669"/>
    <property type="project" value="UniProtKB-UniRule"/>
</dbReference>
<dbReference type="GO" id="GO:0016208">
    <property type="term" value="F:AMP binding"/>
    <property type="evidence" value="ECO:0007669"/>
    <property type="project" value="InterPro"/>
</dbReference>
<dbReference type="GO" id="GO:0005524">
    <property type="term" value="F:ATP binding"/>
    <property type="evidence" value="ECO:0007669"/>
    <property type="project" value="UniProtKB-KW"/>
</dbReference>
<dbReference type="GO" id="GO:0046872">
    <property type="term" value="F:metal ion binding"/>
    <property type="evidence" value="ECO:0007669"/>
    <property type="project" value="UniProtKB-KW"/>
</dbReference>
<dbReference type="GO" id="GO:0019427">
    <property type="term" value="P:acetyl-CoA biosynthetic process from acetate"/>
    <property type="evidence" value="ECO:0007669"/>
    <property type="project" value="InterPro"/>
</dbReference>
<dbReference type="CDD" id="cd05966">
    <property type="entry name" value="ACS"/>
    <property type="match status" value="1"/>
</dbReference>
<dbReference type="FunFam" id="3.30.300.30:FF:000004">
    <property type="entry name" value="Acetyl-coenzyme A synthetase"/>
    <property type="match status" value="1"/>
</dbReference>
<dbReference type="FunFam" id="3.40.50.12780:FF:000001">
    <property type="entry name" value="Acetyl-coenzyme A synthetase"/>
    <property type="match status" value="1"/>
</dbReference>
<dbReference type="Gene3D" id="3.30.300.30">
    <property type="match status" value="1"/>
</dbReference>
<dbReference type="Gene3D" id="3.40.50.12780">
    <property type="entry name" value="N-terminal domain of ligase-like"/>
    <property type="match status" value="1"/>
</dbReference>
<dbReference type="HAMAP" id="MF_01123">
    <property type="entry name" value="Ac_CoA_synth"/>
    <property type="match status" value="1"/>
</dbReference>
<dbReference type="InterPro" id="IPR011904">
    <property type="entry name" value="Ac_CoA_lig"/>
</dbReference>
<dbReference type="InterPro" id="IPR032387">
    <property type="entry name" value="ACAS_N"/>
</dbReference>
<dbReference type="InterPro" id="IPR025110">
    <property type="entry name" value="AMP-bd_C"/>
</dbReference>
<dbReference type="InterPro" id="IPR045851">
    <property type="entry name" value="AMP-bd_C_sf"/>
</dbReference>
<dbReference type="InterPro" id="IPR000873">
    <property type="entry name" value="AMP-dep_synth/lig_dom"/>
</dbReference>
<dbReference type="InterPro" id="IPR042099">
    <property type="entry name" value="ANL_N_sf"/>
</dbReference>
<dbReference type="NCBIfam" id="TIGR02188">
    <property type="entry name" value="Ac_CoA_lig_AcsA"/>
    <property type="match status" value="1"/>
</dbReference>
<dbReference type="NCBIfam" id="NF001208">
    <property type="entry name" value="PRK00174.1"/>
    <property type="match status" value="1"/>
</dbReference>
<dbReference type="PANTHER" id="PTHR24095">
    <property type="entry name" value="ACETYL-COENZYME A SYNTHETASE"/>
    <property type="match status" value="1"/>
</dbReference>
<dbReference type="PANTHER" id="PTHR24095:SF14">
    <property type="entry name" value="ACETYL-COENZYME A SYNTHETASE 1"/>
    <property type="match status" value="1"/>
</dbReference>
<dbReference type="Pfam" id="PF16177">
    <property type="entry name" value="ACAS_N"/>
    <property type="match status" value="1"/>
</dbReference>
<dbReference type="Pfam" id="PF00501">
    <property type="entry name" value="AMP-binding"/>
    <property type="match status" value="1"/>
</dbReference>
<dbReference type="Pfam" id="PF13193">
    <property type="entry name" value="AMP-binding_C"/>
    <property type="match status" value="1"/>
</dbReference>
<dbReference type="SUPFAM" id="SSF56801">
    <property type="entry name" value="Acetyl-CoA synthetase-like"/>
    <property type="match status" value="1"/>
</dbReference>